<evidence type="ECO:0000255" key="1"/>
<evidence type="ECO:0000255" key="2">
    <source>
        <dbReference type="PROSITE-ProRule" id="PRU00448"/>
    </source>
</evidence>
<evidence type="ECO:0000256" key="3">
    <source>
        <dbReference type="SAM" id="MobiDB-lite"/>
    </source>
</evidence>
<evidence type="ECO:0000269" key="4">
    <source>
    </source>
</evidence>
<evidence type="ECO:0000305" key="5"/>
<evidence type="ECO:0000305" key="6">
    <source>
    </source>
</evidence>
<evidence type="ECO:0000312" key="7">
    <source>
        <dbReference type="EMBL" id="EAS00278.2"/>
    </source>
</evidence>
<evidence type="ECO:0000312" key="8">
    <source>
        <dbReference type="Proteomes" id="UP000009168"/>
    </source>
</evidence>
<protein>
    <recommendedName>
        <fullName evidence="5">Cilia- and flagella-associated protein 337 B</fullName>
    </recommendedName>
</protein>
<organism evidence="7 8">
    <name type="scientific">Tetrahymena thermophila (strain SB210)</name>
    <dbReference type="NCBI Taxonomy" id="312017"/>
    <lineage>
        <taxon>Eukaryota</taxon>
        <taxon>Sar</taxon>
        <taxon>Alveolata</taxon>
        <taxon>Ciliophora</taxon>
        <taxon>Intramacronucleata</taxon>
        <taxon>Oligohymenophorea</taxon>
        <taxon>Hymenostomatida</taxon>
        <taxon>Tetrahymenina</taxon>
        <taxon>Tetrahymenidae</taxon>
        <taxon>Tetrahymena</taxon>
    </lineage>
</organism>
<reference evidence="8" key="1">
    <citation type="journal article" date="2006" name="PLoS Biol.">
        <title>Macronuclear genome sequence of the ciliate Tetrahymena thermophila, a model eukaryote.</title>
        <authorList>
            <person name="Eisen J.A."/>
            <person name="Coyne R.S."/>
            <person name="Wu M."/>
            <person name="Wu D."/>
            <person name="Thiagarajan M."/>
            <person name="Wortman J.R."/>
            <person name="Badger J.H."/>
            <person name="Ren Q."/>
            <person name="Amedeo P."/>
            <person name="Jones K.M."/>
            <person name="Tallon L.J."/>
            <person name="Delcher A.L."/>
            <person name="Salzberg S.L."/>
            <person name="Silva J.C."/>
            <person name="Haas B.J."/>
            <person name="Majoros W.H."/>
            <person name="Farzad M."/>
            <person name="Carlton J.M."/>
            <person name="Smith R.K. Jr."/>
            <person name="Garg J."/>
            <person name="Pearlman R.E."/>
            <person name="Karrer K.M."/>
            <person name="Sun L."/>
            <person name="Manning G."/>
            <person name="Elde N.C."/>
            <person name="Turkewitz A.P."/>
            <person name="Asai D.J."/>
            <person name="Wilkes D.E."/>
            <person name="Wang Y."/>
            <person name="Cai H."/>
            <person name="Collins K."/>
            <person name="Stewart B.A."/>
            <person name="Lee S.R."/>
            <person name="Wilamowska K."/>
            <person name="Weinberg Z."/>
            <person name="Ruzzo W.L."/>
            <person name="Wloga D."/>
            <person name="Gaertig J."/>
            <person name="Frankel J."/>
            <person name="Tsao C.-C."/>
            <person name="Gorovsky M.A."/>
            <person name="Keeling P.J."/>
            <person name="Waller R.F."/>
            <person name="Patron N.J."/>
            <person name="Cherry J.M."/>
            <person name="Stover N.A."/>
            <person name="Krieger C.J."/>
            <person name="del Toro C."/>
            <person name="Ryder H.F."/>
            <person name="Williamson S.C."/>
            <person name="Barbeau R.A."/>
            <person name="Hamilton E.P."/>
            <person name="Orias E."/>
        </authorList>
    </citation>
    <scope>NUCLEOTIDE SEQUENCE [LARGE SCALE GENOMIC DNA]</scope>
    <source>
        <strain evidence="8">SB210</strain>
    </source>
</reference>
<reference key="2">
    <citation type="journal article" date="2023" name="Nat. Commun.">
        <title>Integrated modeling of the Nexin-dynein regulatory complex reveals its regulatory mechanism.</title>
        <authorList>
            <person name="Ghanaeian A."/>
            <person name="Majhi S."/>
            <person name="McCafferty C.L."/>
            <person name="Nami B."/>
            <person name="Black C.S."/>
            <person name="Yang S.K."/>
            <person name="Legal T."/>
            <person name="Papoulas O."/>
            <person name="Janowska M."/>
            <person name="Valente-Paterno M."/>
            <person name="Marcotte E.M."/>
            <person name="Wloga D."/>
            <person name="Bui K.H."/>
        </authorList>
    </citation>
    <scope>FUNCTION</scope>
    <scope>SUBUNIT</scope>
    <scope>SUBCELLULAR LOCATION</scope>
</reference>
<dbReference type="EMBL" id="GG662621">
    <property type="protein sequence ID" value="EAS00278.2"/>
    <property type="molecule type" value="Genomic_DNA"/>
</dbReference>
<dbReference type="RefSeq" id="XP_001020523.2">
    <property type="nucleotide sequence ID" value="XM_001020523.2"/>
</dbReference>
<dbReference type="STRING" id="312017.I7MKT5"/>
<dbReference type="GeneID" id="7838608"/>
<dbReference type="KEGG" id="tet:TTHERM_00218510"/>
<dbReference type="eggNOG" id="KOG0267">
    <property type="taxonomic scope" value="Eukaryota"/>
</dbReference>
<dbReference type="InParanoid" id="I7MKT5"/>
<dbReference type="OrthoDB" id="445034at2759"/>
<dbReference type="Proteomes" id="UP000009168">
    <property type="component" value="Unassembled WGS sequence"/>
</dbReference>
<dbReference type="GO" id="GO:0005929">
    <property type="term" value="C:cilium"/>
    <property type="evidence" value="ECO:0007669"/>
    <property type="project" value="UniProtKB-SubCell"/>
</dbReference>
<dbReference type="GO" id="GO:0005509">
    <property type="term" value="F:calcium ion binding"/>
    <property type="evidence" value="ECO:0007669"/>
    <property type="project" value="InterPro"/>
</dbReference>
<dbReference type="Gene3D" id="2.130.10.10">
    <property type="entry name" value="YVTN repeat-like/Quinoprotein amine dehydrogenase"/>
    <property type="match status" value="3"/>
</dbReference>
<dbReference type="InterPro" id="IPR018247">
    <property type="entry name" value="EF_Hand_1_Ca_BS"/>
</dbReference>
<dbReference type="InterPro" id="IPR002048">
    <property type="entry name" value="EF_hand_dom"/>
</dbReference>
<dbReference type="InterPro" id="IPR011047">
    <property type="entry name" value="Quinoprotein_ADH-like_sf"/>
</dbReference>
<dbReference type="InterPro" id="IPR051242">
    <property type="entry name" value="WD-EF-hand_domain"/>
</dbReference>
<dbReference type="InterPro" id="IPR015943">
    <property type="entry name" value="WD40/YVTN_repeat-like_dom_sf"/>
</dbReference>
<dbReference type="InterPro" id="IPR019775">
    <property type="entry name" value="WD40_repeat_CS"/>
</dbReference>
<dbReference type="InterPro" id="IPR036322">
    <property type="entry name" value="WD40_repeat_dom_sf"/>
</dbReference>
<dbReference type="InterPro" id="IPR001680">
    <property type="entry name" value="WD40_rpt"/>
</dbReference>
<dbReference type="PANTHER" id="PTHR44324">
    <property type="entry name" value="WD40 REPEAT DOMAIN 95"/>
    <property type="match status" value="1"/>
</dbReference>
<dbReference type="PANTHER" id="PTHR44324:SF4">
    <property type="entry name" value="WD40 REPEAT DOMAIN 95"/>
    <property type="match status" value="1"/>
</dbReference>
<dbReference type="Pfam" id="PF00400">
    <property type="entry name" value="WD40"/>
    <property type="match status" value="3"/>
</dbReference>
<dbReference type="SMART" id="SM00320">
    <property type="entry name" value="WD40"/>
    <property type="match status" value="9"/>
</dbReference>
<dbReference type="SUPFAM" id="SSF50998">
    <property type="entry name" value="Quinoprotein alcohol dehydrogenase-like"/>
    <property type="match status" value="1"/>
</dbReference>
<dbReference type="SUPFAM" id="SSF50978">
    <property type="entry name" value="WD40 repeat-like"/>
    <property type="match status" value="1"/>
</dbReference>
<dbReference type="PROSITE" id="PS00018">
    <property type="entry name" value="EF_HAND_1"/>
    <property type="match status" value="1"/>
</dbReference>
<dbReference type="PROSITE" id="PS50222">
    <property type="entry name" value="EF_HAND_2"/>
    <property type="match status" value="1"/>
</dbReference>
<dbReference type="PROSITE" id="PS00678">
    <property type="entry name" value="WD_REPEATS_1"/>
    <property type="match status" value="1"/>
</dbReference>
<dbReference type="PROSITE" id="PS50082">
    <property type="entry name" value="WD_REPEATS_2"/>
    <property type="match status" value="3"/>
</dbReference>
<dbReference type="PROSITE" id="PS50294">
    <property type="entry name" value="WD_REPEATS_REGION"/>
    <property type="match status" value="2"/>
</dbReference>
<proteinExistence type="evidence at protein level"/>
<keyword id="KW-0966">Cell projection</keyword>
<keyword id="KW-0175">Coiled coil</keyword>
<keyword id="KW-1185">Reference proteome</keyword>
<keyword id="KW-0677">Repeat</keyword>
<keyword id="KW-0853">WD repeat</keyword>
<comment type="function">
    <text evidence="4">Associates with components of the nexin-dynein regulatory complex (N-DRC), a key regulator of ciliary/flagellar motility, and might act as an inner dynein arm (IDA) hub or linkage.</text>
</comment>
<comment type="subunit">
    <text evidence="4">Associates with components of the nexin-dynein regulatory complex (N-DRC) and the CFAP184:CFAP263 complex.</text>
</comment>
<comment type="subcellular location">
    <subcellularLocation>
        <location evidence="6">Cell projection</location>
        <location evidence="6">Cilium</location>
    </subcellularLocation>
</comment>
<comment type="similarity">
    <text>Belongs to the CFAP337 family.</text>
</comment>
<accession>I7MKT5</accession>
<name>C337B_TETTS</name>
<feature type="chain" id="PRO_0000460222" description="Cilia- and flagella-associated protein 337 B">
    <location>
        <begin position="1"/>
        <end position="1255"/>
    </location>
</feature>
<feature type="domain" description="EF-hand" evidence="2">
    <location>
        <begin position="87"/>
        <end position="122"/>
    </location>
</feature>
<feature type="repeat" description="WD 1" evidence="1">
    <location>
        <begin position="228"/>
        <end position="269"/>
    </location>
</feature>
<feature type="repeat" description="WD 2" evidence="1">
    <location>
        <begin position="282"/>
        <end position="322"/>
    </location>
</feature>
<feature type="repeat" description="WD 3" evidence="1">
    <location>
        <begin position="326"/>
        <end position="365"/>
    </location>
</feature>
<feature type="repeat" description="WD 4" evidence="1">
    <location>
        <begin position="368"/>
        <end position="407"/>
    </location>
</feature>
<feature type="repeat" description="WD 5" evidence="1">
    <location>
        <begin position="410"/>
        <end position="449"/>
    </location>
</feature>
<feature type="repeat" description="WD 6" evidence="1">
    <location>
        <begin position="496"/>
        <end position="536"/>
    </location>
</feature>
<feature type="repeat" description="WD 7" evidence="1">
    <location>
        <begin position="538"/>
        <end position="577"/>
    </location>
</feature>
<feature type="repeat" description="WD 8" evidence="1">
    <location>
        <begin position="580"/>
        <end position="624"/>
    </location>
</feature>
<feature type="repeat" description="WD 9" evidence="1">
    <location>
        <begin position="625"/>
        <end position="664"/>
    </location>
</feature>
<feature type="repeat" description="WD 10" evidence="1">
    <location>
        <begin position="669"/>
        <end position="708"/>
    </location>
</feature>
<feature type="repeat" description="WD 11" evidence="1">
    <location>
        <begin position="769"/>
        <end position="808"/>
    </location>
</feature>
<feature type="repeat" description="WD 12" evidence="1">
    <location>
        <begin position="844"/>
        <end position="883"/>
    </location>
</feature>
<feature type="region of interest" description="Disordered" evidence="3">
    <location>
        <begin position="941"/>
        <end position="988"/>
    </location>
</feature>
<feature type="region of interest" description="Disordered" evidence="3">
    <location>
        <begin position="1140"/>
        <end position="1160"/>
    </location>
</feature>
<feature type="compositionally biased region" description="Low complexity" evidence="3">
    <location>
        <begin position="953"/>
        <end position="969"/>
    </location>
</feature>
<feature type="compositionally biased region" description="Polar residues" evidence="3">
    <location>
        <begin position="1148"/>
        <end position="1160"/>
    </location>
</feature>
<feature type="binding site" evidence="2">
    <location>
        <position position="100"/>
    </location>
    <ligand>
        <name>Ca(2+)</name>
        <dbReference type="ChEBI" id="CHEBI:29108"/>
    </ligand>
</feature>
<feature type="binding site" evidence="2">
    <location>
        <position position="102"/>
    </location>
    <ligand>
        <name>Ca(2+)</name>
        <dbReference type="ChEBI" id="CHEBI:29108"/>
    </ligand>
</feature>
<feature type="binding site" evidence="2">
    <location>
        <position position="104"/>
    </location>
    <ligand>
        <name>Ca(2+)</name>
        <dbReference type="ChEBI" id="CHEBI:29108"/>
    </ligand>
</feature>
<feature type="binding site" evidence="2">
    <location>
        <position position="111"/>
    </location>
    <ligand>
        <name>Ca(2+)</name>
        <dbReference type="ChEBI" id="CHEBI:29108"/>
    </ligand>
</feature>
<sequence>MSILSKKLNKLDHTIPIYSPRTTYKNIRQNDEHLLADLTLNFDPFTINVLKNEFGIRDMQMKLSEFILVVKEHLLSWQVDIPNRETKLVRCLTNLFEEIDLNGNGILEWDEFTNYVIEKATVLNNIKTKVDEIKTYTKSQVKPLQAQTKHLTHKFNNLVTKILYIPHIDRLALYEEGSAEILFMNPETGVMNNKTLKVVPKSLFVTSSTVKKDEEGLIHVETKKNFIDLKTMILDILYIPDKKYQVLLTSSNDKYVRGWKHSSNGWVLASQPDNEEELIEHEFKNEIYCLAWDSLNEILYCGQKNGNIVIWYFKTDTEKELEREGAHTEVIMDMITMPKLQFLASGALDGLLILWDTINNKKKRVYKEHTRGITSLSFNEALILLFSAGFDHEVCVWNPYIDNLIYKISGHSSPLLGVKVIEGTSQVITLDSDGNVRVTDIKKFSNVQCFSVETSDEKHKFNPQCFTYIPKPLKLAFCGRSVQLYEYDKNYNPNYVDDYVAICCAFVPSQLAFYTPAGNKIKLWNALTGDIKKIFSDVTQGEITCFTLDSLKKRMLIGDSMGQIGIYNTYNGAMIKALPKHSAEIIQIIHADAITMFISAAMDNKINMTLDNDFGENELIRTLELKDVMITSLGFDPITKMIIVATNTGITSFYESDTGKQNGSFSELTQYEEITSLNLIKNLPYIITTTTNGKINFIALPPLLFKFQKVFYFKNEDSEQKLLEQQKIQKEGEQQLQQQQTQQINIGSAKGSILNNMGQGKRKQDDQVQQNLSISNCIYCDQTKCLFLSDDKGFIKCFDISQILTILEKSYNNHKDKSNNGAKSFLIPPNFDGVEYQEVWSQRAHYEMIKSLEYIQEENLLITTAYDKKVKLWDSKTGNLIDQLQQNYDKQEPRPIAFKRSGTEEIYDTNLEERIDLKRKSSLKNAKLLVKNEQKGSQTAIKSLSLTDKKLNTQESSTQEQEAAQQPQQNKNEGVQGQGDDLFANFNPNKTYDEEFNPFYFMDKIDKTKLKTDRSNSDWKLHINYIKYFESFEDSIKQLNIDIQKQEHELREKTEKQGINNRRFKVNPYQNSDLNAQKFGVDHKPILKDEINFKQENQDQHKVKADNRIQEGLNQVTNSQATLPRIASLQNNKLKLQNQQQQVQNQQTEPSSNRSHQQPGIETKTLAAISGDQNKKQKKVWDNLYKKELQSKFLFGSNQSEIRLSKEEVDAAHRLAAALANYDKDDYRSLKFYNIQIKESKGPKKLQPLSQSKKK</sequence>
<gene>
    <name evidence="5" type="primary">CFAP337B</name>
    <name evidence="7" type="ORF">TTHERM_00218510</name>
</gene>